<sequence length="367" mass="42101">MEKSSIYGLTWTKLTEWLEAHGQKKFRATQVWDWLYRKRVKTFEEMSNVPKETIELLTANFVMNTLEEQVVQESTDGTTKYLFKLSDGNLIETVMMKQEYGLSVCVTTQVGCNIGCTFCASGLLKKSRDLTAGEIVEQIMNVQHYLDGRNLEERVSHVVVMGIGEPFDNYDNVMDFLRVINHDKGLAIGARHITVSTSGLAPRIIDFANEDFQVNLAISLHAPNNELRTSIMRINKTYSIEKLMEAIHYYVNKTNRRITFEYIMLKGVNDHKKEALELAALLGEHRHLAYVNLIPYNPVDEHIDYERSTKEDVLAFYDTLKKNGINCVIRREHGTDIDAACGQLRSKQIKRVGVRERMKQKQAAAEE</sequence>
<dbReference type="EC" id="2.1.1.192" evidence="1"/>
<dbReference type="EMBL" id="FM242711">
    <property type="protein sequence ID" value="CAS04270.1"/>
    <property type="molecule type" value="Genomic_DNA"/>
</dbReference>
<dbReference type="RefSeq" id="WP_003725208.1">
    <property type="nucleotide sequence ID" value="NC_012488.1"/>
</dbReference>
<dbReference type="SMR" id="C1KZZ3"/>
<dbReference type="GeneID" id="93233932"/>
<dbReference type="KEGG" id="lmc:Lm4b_00502"/>
<dbReference type="HOGENOM" id="CLU_029101_0_1_9"/>
<dbReference type="GO" id="GO:0005737">
    <property type="term" value="C:cytoplasm"/>
    <property type="evidence" value="ECO:0007669"/>
    <property type="project" value="UniProtKB-SubCell"/>
</dbReference>
<dbReference type="GO" id="GO:0051539">
    <property type="term" value="F:4 iron, 4 sulfur cluster binding"/>
    <property type="evidence" value="ECO:0007669"/>
    <property type="project" value="UniProtKB-UniRule"/>
</dbReference>
<dbReference type="GO" id="GO:0046872">
    <property type="term" value="F:metal ion binding"/>
    <property type="evidence" value="ECO:0007669"/>
    <property type="project" value="UniProtKB-KW"/>
</dbReference>
<dbReference type="GO" id="GO:0070040">
    <property type="term" value="F:rRNA (adenine(2503)-C2-)-methyltransferase activity"/>
    <property type="evidence" value="ECO:0007669"/>
    <property type="project" value="UniProtKB-UniRule"/>
</dbReference>
<dbReference type="GO" id="GO:0019843">
    <property type="term" value="F:rRNA binding"/>
    <property type="evidence" value="ECO:0007669"/>
    <property type="project" value="UniProtKB-UniRule"/>
</dbReference>
<dbReference type="GO" id="GO:0002935">
    <property type="term" value="F:tRNA (adenine(37)-C2)-methyltransferase activity"/>
    <property type="evidence" value="ECO:0007669"/>
    <property type="project" value="UniProtKB-UniRule"/>
</dbReference>
<dbReference type="GO" id="GO:0000049">
    <property type="term" value="F:tRNA binding"/>
    <property type="evidence" value="ECO:0007669"/>
    <property type="project" value="UniProtKB-UniRule"/>
</dbReference>
<dbReference type="GO" id="GO:0070475">
    <property type="term" value="P:rRNA base methylation"/>
    <property type="evidence" value="ECO:0007669"/>
    <property type="project" value="UniProtKB-UniRule"/>
</dbReference>
<dbReference type="GO" id="GO:0030488">
    <property type="term" value="P:tRNA methylation"/>
    <property type="evidence" value="ECO:0007669"/>
    <property type="project" value="UniProtKB-UniRule"/>
</dbReference>
<dbReference type="CDD" id="cd01335">
    <property type="entry name" value="Radical_SAM"/>
    <property type="match status" value="1"/>
</dbReference>
<dbReference type="FunFam" id="3.20.20.70:FF:000014">
    <property type="entry name" value="Probable dual-specificity RNA methyltransferase RlmN"/>
    <property type="match status" value="1"/>
</dbReference>
<dbReference type="Gene3D" id="1.10.150.530">
    <property type="match status" value="1"/>
</dbReference>
<dbReference type="Gene3D" id="3.20.20.70">
    <property type="entry name" value="Aldolase class I"/>
    <property type="match status" value="1"/>
</dbReference>
<dbReference type="HAMAP" id="MF_01849">
    <property type="entry name" value="RNA_methyltr_RlmN"/>
    <property type="match status" value="1"/>
</dbReference>
<dbReference type="InterPro" id="IPR013785">
    <property type="entry name" value="Aldolase_TIM"/>
</dbReference>
<dbReference type="InterPro" id="IPR040072">
    <property type="entry name" value="Methyltransferase_A"/>
</dbReference>
<dbReference type="InterPro" id="IPR048641">
    <property type="entry name" value="RlmN_N"/>
</dbReference>
<dbReference type="InterPro" id="IPR027492">
    <property type="entry name" value="RNA_MTrfase_RlmN"/>
</dbReference>
<dbReference type="InterPro" id="IPR004383">
    <property type="entry name" value="rRNA_lsu_MTrfase_RlmN/Cfr"/>
</dbReference>
<dbReference type="InterPro" id="IPR007197">
    <property type="entry name" value="rSAM"/>
</dbReference>
<dbReference type="NCBIfam" id="TIGR00048">
    <property type="entry name" value="rRNA_mod_RlmN"/>
    <property type="match status" value="1"/>
</dbReference>
<dbReference type="PANTHER" id="PTHR30544">
    <property type="entry name" value="23S RRNA METHYLTRANSFERASE"/>
    <property type="match status" value="1"/>
</dbReference>
<dbReference type="PANTHER" id="PTHR30544:SF5">
    <property type="entry name" value="RADICAL SAM CORE DOMAIN-CONTAINING PROTEIN"/>
    <property type="match status" value="1"/>
</dbReference>
<dbReference type="Pfam" id="PF04055">
    <property type="entry name" value="Radical_SAM"/>
    <property type="match status" value="1"/>
</dbReference>
<dbReference type="Pfam" id="PF21016">
    <property type="entry name" value="RlmN_N"/>
    <property type="match status" value="1"/>
</dbReference>
<dbReference type="PIRSF" id="PIRSF006004">
    <property type="entry name" value="CHP00048"/>
    <property type="match status" value="1"/>
</dbReference>
<dbReference type="SFLD" id="SFLDF00275">
    <property type="entry name" value="adenosine_C2_methyltransferase"/>
    <property type="match status" value="1"/>
</dbReference>
<dbReference type="SFLD" id="SFLDG01062">
    <property type="entry name" value="methyltransferase_(Class_A)"/>
    <property type="match status" value="1"/>
</dbReference>
<dbReference type="SUPFAM" id="SSF102114">
    <property type="entry name" value="Radical SAM enzymes"/>
    <property type="match status" value="1"/>
</dbReference>
<dbReference type="PROSITE" id="PS51918">
    <property type="entry name" value="RADICAL_SAM"/>
    <property type="match status" value="1"/>
</dbReference>
<keyword id="KW-0004">4Fe-4S</keyword>
<keyword id="KW-0963">Cytoplasm</keyword>
<keyword id="KW-1015">Disulfide bond</keyword>
<keyword id="KW-0408">Iron</keyword>
<keyword id="KW-0411">Iron-sulfur</keyword>
<keyword id="KW-0479">Metal-binding</keyword>
<keyword id="KW-0489">Methyltransferase</keyword>
<keyword id="KW-0698">rRNA processing</keyword>
<keyword id="KW-0949">S-adenosyl-L-methionine</keyword>
<keyword id="KW-0808">Transferase</keyword>
<keyword id="KW-0819">tRNA processing</keyword>
<accession>C1KZZ3</accession>
<gene>
    <name evidence="1" type="primary">rlmN</name>
    <name type="ordered locus">Lm4b_00502</name>
</gene>
<reference key="1">
    <citation type="journal article" date="2012" name="BMC Genomics">
        <title>Comparative genomics and transcriptomics of lineages I, II, and III strains of Listeria monocytogenes.</title>
        <authorList>
            <person name="Hain T."/>
            <person name="Ghai R."/>
            <person name="Billion A."/>
            <person name="Kuenne C.T."/>
            <person name="Steinweg C."/>
            <person name="Izar B."/>
            <person name="Mohamed W."/>
            <person name="Mraheil M."/>
            <person name="Domann E."/>
            <person name="Schaffrath S."/>
            <person name="Karst U."/>
            <person name="Goesmann A."/>
            <person name="Oehm S."/>
            <person name="Puhler A."/>
            <person name="Merkl R."/>
            <person name="Vorwerk S."/>
            <person name="Glaser P."/>
            <person name="Garrido P."/>
            <person name="Rusniok C."/>
            <person name="Buchrieser C."/>
            <person name="Goebel W."/>
            <person name="Chakraborty T."/>
        </authorList>
    </citation>
    <scope>NUCLEOTIDE SEQUENCE [LARGE SCALE GENOMIC DNA]</scope>
    <source>
        <strain>CLIP80459</strain>
    </source>
</reference>
<organism>
    <name type="scientific">Listeria monocytogenes serotype 4b (strain CLIP80459)</name>
    <dbReference type="NCBI Taxonomy" id="568819"/>
    <lineage>
        <taxon>Bacteria</taxon>
        <taxon>Bacillati</taxon>
        <taxon>Bacillota</taxon>
        <taxon>Bacilli</taxon>
        <taxon>Bacillales</taxon>
        <taxon>Listeriaceae</taxon>
        <taxon>Listeria</taxon>
    </lineage>
</organism>
<name>RLMN_LISMC</name>
<proteinExistence type="inferred from homology"/>
<protein>
    <recommendedName>
        <fullName evidence="1">Probable dual-specificity RNA methyltransferase RlmN</fullName>
        <ecNumber evidence="1">2.1.1.192</ecNumber>
    </recommendedName>
    <alternativeName>
        <fullName evidence="1">23S rRNA (adenine(2503)-C(2))-methyltransferase</fullName>
    </alternativeName>
    <alternativeName>
        <fullName evidence="1">23S rRNA m2A2503 methyltransferase</fullName>
    </alternativeName>
    <alternativeName>
        <fullName evidence="1">Ribosomal RNA large subunit methyltransferase N</fullName>
    </alternativeName>
    <alternativeName>
        <fullName evidence="1">tRNA (adenine(37)-C(2))-methyltransferase</fullName>
    </alternativeName>
    <alternativeName>
        <fullName evidence="1">tRNA m2A37 methyltransferase</fullName>
    </alternativeName>
</protein>
<comment type="function">
    <text evidence="1">Specifically methylates position 2 of adenine 2503 in 23S rRNA and position 2 of adenine 37 in tRNAs.</text>
</comment>
<comment type="catalytic activity">
    <reaction evidence="1">
        <text>adenosine(2503) in 23S rRNA + 2 reduced [2Fe-2S]-[ferredoxin] + 2 S-adenosyl-L-methionine = 2-methyladenosine(2503) in 23S rRNA + 5'-deoxyadenosine + L-methionine + 2 oxidized [2Fe-2S]-[ferredoxin] + S-adenosyl-L-homocysteine</text>
        <dbReference type="Rhea" id="RHEA:42916"/>
        <dbReference type="Rhea" id="RHEA-COMP:10000"/>
        <dbReference type="Rhea" id="RHEA-COMP:10001"/>
        <dbReference type="Rhea" id="RHEA-COMP:10152"/>
        <dbReference type="Rhea" id="RHEA-COMP:10282"/>
        <dbReference type="ChEBI" id="CHEBI:17319"/>
        <dbReference type="ChEBI" id="CHEBI:33737"/>
        <dbReference type="ChEBI" id="CHEBI:33738"/>
        <dbReference type="ChEBI" id="CHEBI:57844"/>
        <dbReference type="ChEBI" id="CHEBI:57856"/>
        <dbReference type="ChEBI" id="CHEBI:59789"/>
        <dbReference type="ChEBI" id="CHEBI:74411"/>
        <dbReference type="ChEBI" id="CHEBI:74497"/>
        <dbReference type="EC" id="2.1.1.192"/>
    </reaction>
</comment>
<comment type="catalytic activity">
    <reaction evidence="1">
        <text>adenosine(37) in tRNA + 2 reduced [2Fe-2S]-[ferredoxin] + 2 S-adenosyl-L-methionine = 2-methyladenosine(37) in tRNA + 5'-deoxyadenosine + L-methionine + 2 oxidized [2Fe-2S]-[ferredoxin] + S-adenosyl-L-homocysteine</text>
        <dbReference type="Rhea" id="RHEA:43332"/>
        <dbReference type="Rhea" id="RHEA-COMP:10000"/>
        <dbReference type="Rhea" id="RHEA-COMP:10001"/>
        <dbReference type="Rhea" id="RHEA-COMP:10162"/>
        <dbReference type="Rhea" id="RHEA-COMP:10485"/>
        <dbReference type="ChEBI" id="CHEBI:17319"/>
        <dbReference type="ChEBI" id="CHEBI:33737"/>
        <dbReference type="ChEBI" id="CHEBI:33738"/>
        <dbReference type="ChEBI" id="CHEBI:57844"/>
        <dbReference type="ChEBI" id="CHEBI:57856"/>
        <dbReference type="ChEBI" id="CHEBI:59789"/>
        <dbReference type="ChEBI" id="CHEBI:74411"/>
        <dbReference type="ChEBI" id="CHEBI:74497"/>
        <dbReference type="EC" id="2.1.1.192"/>
    </reaction>
</comment>
<comment type="cofactor">
    <cofactor evidence="1">
        <name>[4Fe-4S] cluster</name>
        <dbReference type="ChEBI" id="CHEBI:49883"/>
    </cofactor>
    <text evidence="1">Binds 1 [4Fe-4S] cluster. The cluster is coordinated with 3 cysteines and an exchangeable S-adenosyl-L-methionine.</text>
</comment>
<comment type="subcellular location">
    <subcellularLocation>
        <location evidence="1">Cytoplasm</location>
    </subcellularLocation>
</comment>
<comment type="miscellaneous">
    <text evidence="1">Reaction proceeds by a ping-pong mechanism involving intermediate methylation of a conserved cysteine residue.</text>
</comment>
<comment type="similarity">
    <text evidence="1">Belongs to the radical SAM superfamily. RlmN family.</text>
</comment>
<evidence type="ECO:0000255" key="1">
    <source>
        <dbReference type="HAMAP-Rule" id="MF_01849"/>
    </source>
</evidence>
<evidence type="ECO:0000255" key="2">
    <source>
        <dbReference type="PROSITE-ProRule" id="PRU01266"/>
    </source>
</evidence>
<feature type="chain" id="PRO_1000216121" description="Probable dual-specificity RNA methyltransferase RlmN">
    <location>
        <begin position="1"/>
        <end position="367"/>
    </location>
</feature>
<feature type="domain" description="Radical SAM core" evidence="2">
    <location>
        <begin position="98"/>
        <end position="326"/>
    </location>
</feature>
<feature type="active site" description="Proton acceptor" evidence="1">
    <location>
        <position position="92"/>
    </location>
</feature>
<feature type="active site" description="S-methylcysteine intermediate" evidence="1">
    <location>
        <position position="341"/>
    </location>
</feature>
<feature type="binding site" evidence="1">
    <location>
        <position position="112"/>
    </location>
    <ligand>
        <name>[4Fe-4S] cluster</name>
        <dbReference type="ChEBI" id="CHEBI:49883"/>
        <note>4Fe-4S-S-AdoMet</note>
    </ligand>
</feature>
<feature type="binding site" evidence="1">
    <location>
        <position position="116"/>
    </location>
    <ligand>
        <name>[4Fe-4S] cluster</name>
        <dbReference type="ChEBI" id="CHEBI:49883"/>
        <note>4Fe-4S-S-AdoMet</note>
    </ligand>
</feature>
<feature type="binding site" evidence="1">
    <location>
        <position position="119"/>
    </location>
    <ligand>
        <name>[4Fe-4S] cluster</name>
        <dbReference type="ChEBI" id="CHEBI:49883"/>
        <note>4Fe-4S-S-AdoMet</note>
    </ligand>
</feature>
<feature type="binding site" evidence="1">
    <location>
        <begin position="164"/>
        <end position="165"/>
    </location>
    <ligand>
        <name>S-adenosyl-L-methionine</name>
        <dbReference type="ChEBI" id="CHEBI:59789"/>
    </ligand>
</feature>
<feature type="binding site" evidence="1">
    <location>
        <position position="196"/>
    </location>
    <ligand>
        <name>S-adenosyl-L-methionine</name>
        <dbReference type="ChEBI" id="CHEBI:59789"/>
    </ligand>
</feature>
<feature type="binding site" evidence="1">
    <location>
        <begin position="219"/>
        <end position="221"/>
    </location>
    <ligand>
        <name>S-adenosyl-L-methionine</name>
        <dbReference type="ChEBI" id="CHEBI:59789"/>
    </ligand>
</feature>
<feature type="binding site" evidence="1">
    <location>
        <position position="297"/>
    </location>
    <ligand>
        <name>S-adenosyl-L-methionine</name>
        <dbReference type="ChEBI" id="CHEBI:59789"/>
    </ligand>
</feature>
<feature type="disulfide bond" description="(transient)" evidence="1">
    <location>
        <begin position="105"/>
        <end position="341"/>
    </location>
</feature>